<proteinExistence type="inferred from homology"/>
<accession>Q32RV6</accession>
<reference key="1">
    <citation type="journal article" date="2005" name="BMC Biol.">
        <title>The complete chloroplast DNA sequences of the charophycean green algae Staurastrum and Zygnema reveal that the chloroplast genome underwent extensive changes during the evolution of the Zygnematales.</title>
        <authorList>
            <person name="Turmel M."/>
            <person name="Otis C."/>
            <person name="Lemieux C."/>
        </authorList>
    </citation>
    <scope>NUCLEOTIDE SEQUENCE [LARGE SCALE GENOMIC DNA]</scope>
</reference>
<evidence type="ECO:0000255" key="1">
    <source>
        <dbReference type="HAMAP-Rule" id="MF_00531"/>
    </source>
</evidence>
<evidence type="ECO:0000305" key="2"/>
<protein>
    <recommendedName>
        <fullName evidence="1">Small ribosomal subunit protein uS19c</fullName>
    </recommendedName>
    <alternativeName>
        <fullName evidence="2">30S ribosomal protein S19, chloroplastic</fullName>
    </alternativeName>
</protein>
<geneLocation type="chloroplast"/>
<organism>
    <name type="scientific">Staurastrum punctulatum</name>
    <name type="common">Green alga</name>
    <name type="synonym">Cosmoastrum punctulatum</name>
    <dbReference type="NCBI Taxonomy" id="102822"/>
    <lineage>
        <taxon>Eukaryota</taxon>
        <taxon>Viridiplantae</taxon>
        <taxon>Streptophyta</taxon>
        <taxon>Zygnematophyceae</taxon>
        <taxon>Zygnematophycidae</taxon>
        <taxon>Desmidiales</taxon>
        <taxon>Desmidiaceae</taxon>
        <taxon>Staurastrum</taxon>
    </lineage>
</organism>
<sequence>MARSLKKGPFVADHLLKKIESLNAQGEKKVIITWSRASIIVPGMIGHTIAVHNGREHLPVYITDLMVGHKLGEFAPTRTFRGHAKSDKKSRR</sequence>
<feature type="chain" id="PRO_0000276927" description="Small ribosomal subunit protein uS19c">
    <location>
        <begin position="1"/>
        <end position="92"/>
    </location>
</feature>
<dbReference type="EMBL" id="AY958085">
    <property type="protein sequence ID" value="AAX45756.1"/>
    <property type="molecule type" value="Genomic_DNA"/>
</dbReference>
<dbReference type="RefSeq" id="YP_636420.1">
    <property type="nucleotide sequence ID" value="NC_008116.1"/>
</dbReference>
<dbReference type="SMR" id="Q32RV6"/>
<dbReference type="GeneID" id="4108630"/>
<dbReference type="GO" id="GO:0009507">
    <property type="term" value="C:chloroplast"/>
    <property type="evidence" value="ECO:0007669"/>
    <property type="project" value="UniProtKB-SubCell"/>
</dbReference>
<dbReference type="GO" id="GO:0005763">
    <property type="term" value="C:mitochondrial small ribosomal subunit"/>
    <property type="evidence" value="ECO:0007669"/>
    <property type="project" value="TreeGrafter"/>
</dbReference>
<dbReference type="GO" id="GO:0019843">
    <property type="term" value="F:rRNA binding"/>
    <property type="evidence" value="ECO:0007669"/>
    <property type="project" value="UniProtKB-UniRule"/>
</dbReference>
<dbReference type="GO" id="GO:0003735">
    <property type="term" value="F:structural constituent of ribosome"/>
    <property type="evidence" value="ECO:0007669"/>
    <property type="project" value="InterPro"/>
</dbReference>
<dbReference type="GO" id="GO:0000028">
    <property type="term" value="P:ribosomal small subunit assembly"/>
    <property type="evidence" value="ECO:0007669"/>
    <property type="project" value="TreeGrafter"/>
</dbReference>
<dbReference type="GO" id="GO:0006412">
    <property type="term" value="P:translation"/>
    <property type="evidence" value="ECO:0007669"/>
    <property type="project" value="UniProtKB-UniRule"/>
</dbReference>
<dbReference type="FunFam" id="3.30.860.10:FF:000001">
    <property type="entry name" value="30S ribosomal protein S19"/>
    <property type="match status" value="1"/>
</dbReference>
<dbReference type="Gene3D" id="3.30.860.10">
    <property type="entry name" value="30s Ribosomal Protein S19, Chain A"/>
    <property type="match status" value="1"/>
</dbReference>
<dbReference type="HAMAP" id="MF_00531">
    <property type="entry name" value="Ribosomal_uS19"/>
    <property type="match status" value="1"/>
</dbReference>
<dbReference type="InterPro" id="IPR002222">
    <property type="entry name" value="Ribosomal_uS19"/>
</dbReference>
<dbReference type="InterPro" id="IPR005732">
    <property type="entry name" value="Ribosomal_uS19_bac-type"/>
</dbReference>
<dbReference type="InterPro" id="IPR020934">
    <property type="entry name" value="Ribosomal_uS19_CS"/>
</dbReference>
<dbReference type="InterPro" id="IPR023575">
    <property type="entry name" value="Ribosomal_uS19_SF"/>
</dbReference>
<dbReference type="NCBIfam" id="TIGR01050">
    <property type="entry name" value="rpsS_bact"/>
    <property type="match status" value="1"/>
</dbReference>
<dbReference type="PANTHER" id="PTHR11880">
    <property type="entry name" value="RIBOSOMAL PROTEIN S19P FAMILY MEMBER"/>
    <property type="match status" value="1"/>
</dbReference>
<dbReference type="PANTHER" id="PTHR11880:SF8">
    <property type="entry name" value="SMALL RIBOSOMAL SUBUNIT PROTEIN US19M"/>
    <property type="match status" value="1"/>
</dbReference>
<dbReference type="Pfam" id="PF00203">
    <property type="entry name" value="Ribosomal_S19"/>
    <property type="match status" value="1"/>
</dbReference>
<dbReference type="PIRSF" id="PIRSF002144">
    <property type="entry name" value="Ribosomal_S19"/>
    <property type="match status" value="1"/>
</dbReference>
<dbReference type="PRINTS" id="PR00975">
    <property type="entry name" value="RIBOSOMALS19"/>
</dbReference>
<dbReference type="SUPFAM" id="SSF54570">
    <property type="entry name" value="Ribosomal protein S19"/>
    <property type="match status" value="1"/>
</dbReference>
<dbReference type="PROSITE" id="PS00323">
    <property type="entry name" value="RIBOSOMAL_S19"/>
    <property type="match status" value="1"/>
</dbReference>
<gene>
    <name evidence="1" type="primary">rps19</name>
</gene>
<comment type="function">
    <text evidence="1">Protein S19 forms a complex with S13 that binds strongly to the 16S ribosomal RNA.</text>
</comment>
<comment type="subcellular location">
    <subcellularLocation>
        <location>Plastid</location>
        <location>Chloroplast</location>
    </subcellularLocation>
</comment>
<comment type="similarity">
    <text evidence="1">Belongs to the universal ribosomal protein uS19 family.</text>
</comment>
<keyword id="KW-0150">Chloroplast</keyword>
<keyword id="KW-0934">Plastid</keyword>
<keyword id="KW-0687">Ribonucleoprotein</keyword>
<keyword id="KW-0689">Ribosomal protein</keyword>
<keyword id="KW-0694">RNA-binding</keyword>
<keyword id="KW-0699">rRNA-binding</keyword>
<name>RR19_STAPU</name>